<accession>Q5NIK6</accession>
<proteinExistence type="inferred from homology"/>
<gene>
    <name evidence="1" type="primary">atpH</name>
    <name type="ordered locus">FTT_0061</name>
</gene>
<protein>
    <recommendedName>
        <fullName evidence="1">ATP synthase subunit delta</fullName>
    </recommendedName>
    <alternativeName>
        <fullName evidence="1">ATP synthase F(1) sector subunit delta</fullName>
    </alternativeName>
    <alternativeName>
        <fullName evidence="1">F-type ATPase subunit delta</fullName>
        <shortName evidence="1">F-ATPase subunit delta</shortName>
    </alternativeName>
</protein>
<evidence type="ECO:0000255" key="1">
    <source>
        <dbReference type="HAMAP-Rule" id="MF_01416"/>
    </source>
</evidence>
<feature type="chain" id="PRO_1000184719" description="ATP synthase subunit delta">
    <location>
        <begin position="1"/>
        <end position="174"/>
    </location>
</feature>
<organism>
    <name type="scientific">Francisella tularensis subsp. tularensis (strain SCHU S4 / Schu 4)</name>
    <dbReference type="NCBI Taxonomy" id="177416"/>
    <lineage>
        <taxon>Bacteria</taxon>
        <taxon>Pseudomonadati</taxon>
        <taxon>Pseudomonadota</taxon>
        <taxon>Gammaproteobacteria</taxon>
        <taxon>Thiotrichales</taxon>
        <taxon>Francisellaceae</taxon>
        <taxon>Francisella</taxon>
    </lineage>
</organism>
<name>ATPD_FRATT</name>
<reference key="1">
    <citation type="journal article" date="2005" name="Nat. Genet.">
        <title>The complete genome sequence of Francisella tularensis, the causative agent of tularemia.</title>
        <authorList>
            <person name="Larsson P."/>
            <person name="Oyston P.C.F."/>
            <person name="Chain P."/>
            <person name="Chu M.C."/>
            <person name="Duffield M."/>
            <person name="Fuxelius H.-H."/>
            <person name="Garcia E."/>
            <person name="Haelltorp G."/>
            <person name="Johansson D."/>
            <person name="Isherwood K.E."/>
            <person name="Karp P.D."/>
            <person name="Larsson E."/>
            <person name="Liu Y."/>
            <person name="Michell S."/>
            <person name="Prior J."/>
            <person name="Prior R."/>
            <person name="Malfatti S."/>
            <person name="Sjoestedt A."/>
            <person name="Svensson K."/>
            <person name="Thompson N."/>
            <person name="Vergez L."/>
            <person name="Wagg J.K."/>
            <person name="Wren B.W."/>
            <person name="Lindler L.E."/>
            <person name="Andersson S.G.E."/>
            <person name="Forsman M."/>
            <person name="Titball R.W."/>
        </authorList>
    </citation>
    <scope>NUCLEOTIDE SEQUENCE [LARGE SCALE GENOMIC DNA]</scope>
    <source>
        <strain>SCHU S4 / Schu 4</strain>
    </source>
</reference>
<comment type="function">
    <text evidence="1">F(1)F(0) ATP synthase produces ATP from ADP in the presence of a proton or sodium gradient. F-type ATPases consist of two structural domains, F(1) containing the extramembraneous catalytic core and F(0) containing the membrane proton channel, linked together by a central stalk and a peripheral stalk. During catalysis, ATP synthesis in the catalytic domain of F(1) is coupled via a rotary mechanism of the central stalk subunits to proton translocation.</text>
</comment>
<comment type="function">
    <text evidence="1">This protein is part of the stalk that links CF(0) to CF(1). It either transmits conformational changes from CF(0) to CF(1) or is implicated in proton conduction.</text>
</comment>
<comment type="subunit">
    <text evidence="1">F-type ATPases have 2 components, F(1) - the catalytic core - and F(0) - the membrane proton channel. F(1) has five subunits: alpha(3), beta(3), gamma(1), delta(1), epsilon(1). F(0) has three main subunits: a(1), b(2) and c(10-14). The alpha and beta chains form an alternating ring which encloses part of the gamma chain. F(1) is attached to F(0) by a central stalk formed by the gamma and epsilon chains, while a peripheral stalk is formed by the delta and b chains.</text>
</comment>
<comment type="subcellular location">
    <subcellularLocation>
        <location evidence="1">Cell inner membrane</location>
        <topology evidence="1">Peripheral membrane protein</topology>
    </subcellularLocation>
</comment>
<comment type="similarity">
    <text evidence="1">Belongs to the ATPase delta chain family.</text>
</comment>
<dbReference type="EMBL" id="AJ749949">
    <property type="protein sequence ID" value="CAG44694.1"/>
    <property type="molecule type" value="Genomic_DNA"/>
</dbReference>
<dbReference type="RefSeq" id="WP_003017341.1">
    <property type="nucleotide sequence ID" value="NZ_CP010290.1"/>
</dbReference>
<dbReference type="RefSeq" id="YP_169136.1">
    <property type="nucleotide sequence ID" value="NC_006570.2"/>
</dbReference>
<dbReference type="SMR" id="Q5NIK6"/>
<dbReference type="STRING" id="177416.FTT_0061"/>
<dbReference type="DNASU" id="3190962"/>
<dbReference type="EnsemblBacteria" id="CAG44694">
    <property type="protein sequence ID" value="CAG44694"/>
    <property type="gene ID" value="FTT_0061"/>
</dbReference>
<dbReference type="KEGG" id="ftu:FTT_0061"/>
<dbReference type="eggNOG" id="COG0712">
    <property type="taxonomic scope" value="Bacteria"/>
</dbReference>
<dbReference type="OrthoDB" id="9816221at2"/>
<dbReference type="Proteomes" id="UP000001174">
    <property type="component" value="Chromosome"/>
</dbReference>
<dbReference type="GO" id="GO:0005886">
    <property type="term" value="C:plasma membrane"/>
    <property type="evidence" value="ECO:0007669"/>
    <property type="project" value="UniProtKB-SubCell"/>
</dbReference>
<dbReference type="GO" id="GO:0045259">
    <property type="term" value="C:proton-transporting ATP synthase complex"/>
    <property type="evidence" value="ECO:0007669"/>
    <property type="project" value="UniProtKB-KW"/>
</dbReference>
<dbReference type="GO" id="GO:0046933">
    <property type="term" value="F:proton-transporting ATP synthase activity, rotational mechanism"/>
    <property type="evidence" value="ECO:0007669"/>
    <property type="project" value="UniProtKB-UniRule"/>
</dbReference>
<dbReference type="Gene3D" id="1.10.520.20">
    <property type="entry name" value="N-terminal domain of the delta subunit of the F1F0-ATP synthase"/>
    <property type="match status" value="1"/>
</dbReference>
<dbReference type="HAMAP" id="MF_01416">
    <property type="entry name" value="ATP_synth_delta_bact"/>
    <property type="match status" value="1"/>
</dbReference>
<dbReference type="InterPro" id="IPR026015">
    <property type="entry name" value="ATP_synth_OSCP/delta_N_sf"/>
</dbReference>
<dbReference type="InterPro" id="IPR020781">
    <property type="entry name" value="ATPase_OSCP/d_CS"/>
</dbReference>
<dbReference type="InterPro" id="IPR000711">
    <property type="entry name" value="ATPase_OSCP/dsu"/>
</dbReference>
<dbReference type="NCBIfam" id="TIGR01145">
    <property type="entry name" value="ATP_synt_delta"/>
    <property type="match status" value="1"/>
</dbReference>
<dbReference type="NCBIfam" id="NF004402">
    <property type="entry name" value="PRK05758.2-2"/>
    <property type="match status" value="1"/>
</dbReference>
<dbReference type="PANTHER" id="PTHR11910">
    <property type="entry name" value="ATP SYNTHASE DELTA CHAIN"/>
    <property type="match status" value="1"/>
</dbReference>
<dbReference type="Pfam" id="PF00213">
    <property type="entry name" value="OSCP"/>
    <property type="match status" value="1"/>
</dbReference>
<dbReference type="PRINTS" id="PR00125">
    <property type="entry name" value="ATPASEDELTA"/>
</dbReference>
<dbReference type="SUPFAM" id="SSF47928">
    <property type="entry name" value="N-terminal domain of the delta subunit of the F1F0-ATP synthase"/>
    <property type="match status" value="1"/>
</dbReference>
<dbReference type="PROSITE" id="PS00389">
    <property type="entry name" value="ATPASE_DELTA"/>
    <property type="match status" value="1"/>
</dbReference>
<sequence>MTNISVIAKPYAKAAFEFANEHNLLQQWSKLLQTFSELIKDKSVAAIVSSPTISQIEVVDALKKQLDENFFNFLALIAENKKMLIMPEIADQFESIKNIHNNVRVADVTLAYATDKNILDSLKTSLEKKFGCTIDMHINIDPAIIGGAVVKVGDTVIDSSVSGHLEKLKSILLS</sequence>
<keyword id="KW-0066">ATP synthesis</keyword>
<keyword id="KW-0997">Cell inner membrane</keyword>
<keyword id="KW-1003">Cell membrane</keyword>
<keyword id="KW-0139">CF(1)</keyword>
<keyword id="KW-0375">Hydrogen ion transport</keyword>
<keyword id="KW-0406">Ion transport</keyword>
<keyword id="KW-0472">Membrane</keyword>
<keyword id="KW-1185">Reference proteome</keyword>
<keyword id="KW-0813">Transport</keyword>